<accession>Q5NHU7</accession>
<comment type="similarity">
    <text evidence="1">Belongs to the bacterial ribosomal protein bL36 family.</text>
</comment>
<sequence length="37" mass="4423">MKVRASVKKMCRNCKVIKRNRVVRVICTDPRHKQRQG</sequence>
<organism>
    <name type="scientific">Francisella tularensis subsp. tularensis (strain SCHU S4 / Schu 4)</name>
    <dbReference type="NCBI Taxonomy" id="177416"/>
    <lineage>
        <taxon>Bacteria</taxon>
        <taxon>Pseudomonadati</taxon>
        <taxon>Pseudomonadota</taxon>
        <taxon>Gammaproteobacteria</taxon>
        <taxon>Thiotrichales</taxon>
        <taxon>Francisellaceae</taxon>
        <taxon>Francisella</taxon>
    </lineage>
</organism>
<keyword id="KW-1185">Reference proteome</keyword>
<keyword id="KW-0687">Ribonucleoprotein</keyword>
<keyword id="KW-0689">Ribosomal protein</keyword>
<dbReference type="EMBL" id="AJ749949">
    <property type="protein sequence ID" value="CAG44979.1"/>
    <property type="molecule type" value="Genomic_DNA"/>
</dbReference>
<dbReference type="RefSeq" id="WP_003017816.1">
    <property type="nucleotide sequence ID" value="NZ_CP010290.1"/>
</dbReference>
<dbReference type="RefSeq" id="YP_169395.1">
    <property type="nucleotide sequence ID" value="NC_006570.2"/>
</dbReference>
<dbReference type="SMR" id="Q5NHU7"/>
<dbReference type="STRING" id="177416.FTT_0346"/>
<dbReference type="DNASU" id="3191985"/>
<dbReference type="EnsemblBacteria" id="CAG44979">
    <property type="protein sequence ID" value="CAG44979"/>
    <property type="gene ID" value="FTT_0346"/>
</dbReference>
<dbReference type="GeneID" id="93254575"/>
<dbReference type="KEGG" id="ftu:FTT_0346"/>
<dbReference type="eggNOG" id="COG0257">
    <property type="taxonomic scope" value="Bacteria"/>
</dbReference>
<dbReference type="Proteomes" id="UP000001174">
    <property type="component" value="Chromosome"/>
</dbReference>
<dbReference type="GO" id="GO:0005737">
    <property type="term" value="C:cytoplasm"/>
    <property type="evidence" value="ECO:0007669"/>
    <property type="project" value="UniProtKB-ARBA"/>
</dbReference>
<dbReference type="GO" id="GO:1990904">
    <property type="term" value="C:ribonucleoprotein complex"/>
    <property type="evidence" value="ECO:0007669"/>
    <property type="project" value="UniProtKB-KW"/>
</dbReference>
<dbReference type="GO" id="GO:0005840">
    <property type="term" value="C:ribosome"/>
    <property type="evidence" value="ECO:0007669"/>
    <property type="project" value="UniProtKB-KW"/>
</dbReference>
<dbReference type="GO" id="GO:0003735">
    <property type="term" value="F:structural constituent of ribosome"/>
    <property type="evidence" value="ECO:0007669"/>
    <property type="project" value="InterPro"/>
</dbReference>
<dbReference type="GO" id="GO:0006412">
    <property type="term" value="P:translation"/>
    <property type="evidence" value="ECO:0007669"/>
    <property type="project" value="UniProtKB-UniRule"/>
</dbReference>
<dbReference type="HAMAP" id="MF_00251">
    <property type="entry name" value="Ribosomal_bL36"/>
    <property type="match status" value="1"/>
</dbReference>
<dbReference type="InterPro" id="IPR000473">
    <property type="entry name" value="Ribosomal_bL36"/>
</dbReference>
<dbReference type="InterPro" id="IPR035977">
    <property type="entry name" value="Ribosomal_bL36_sp"/>
</dbReference>
<dbReference type="NCBIfam" id="TIGR01022">
    <property type="entry name" value="rpmJ_bact"/>
    <property type="match status" value="1"/>
</dbReference>
<dbReference type="PANTHER" id="PTHR42888">
    <property type="entry name" value="50S RIBOSOMAL PROTEIN L36, CHLOROPLASTIC"/>
    <property type="match status" value="1"/>
</dbReference>
<dbReference type="PANTHER" id="PTHR42888:SF1">
    <property type="entry name" value="LARGE RIBOSOMAL SUBUNIT PROTEIN BL36C"/>
    <property type="match status" value="1"/>
</dbReference>
<dbReference type="Pfam" id="PF00444">
    <property type="entry name" value="Ribosomal_L36"/>
    <property type="match status" value="1"/>
</dbReference>
<dbReference type="SUPFAM" id="SSF57840">
    <property type="entry name" value="Ribosomal protein L36"/>
    <property type="match status" value="1"/>
</dbReference>
<dbReference type="PROSITE" id="PS00828">
    <property type="entry name" value="RIBOSOMAL_L36"/>
    <property type="match status" value="1"/>
</dbReference>
<evidence type="ECO:0000255" key="1">
    <source>
        <dbReference type="HAMAP-Rule" id="MF_00251"/>
    </source>
</evidence>
<evidence type="ECO:0000305" key="2"/>
<reference key="1">
    <citation type="journal article" date="2005" name="Nat. Genet.">
        <title>The complete genome sequence of Francisella tularensis, the causative agent of tularemia.</title>
        <authorList>
            <person name="Larsson P."/>
            <person name="Oyston P.C.F."/>
            <person name="Chain P."/>
            <person name="Chu M.C."/>
            <person name="Duffield M."/>
            <person name="Fuxelius H.-H."/>
            <person name="Garcia E."/>
            <person name="Haelltorp G."/>
            <person name="Johansson D."/>
            <person name="Isherwood K.E."/>
            <person name="Karp P.D."/>
            <person name="Larsson E."/>
            <person name="Liu Y."/>
            <person name="Michell S."/>
            <person name="Prior J."/>
            <person name="Prior R."/>
            <person name="Malfatti S."/>
            <person name="Sjoestedt A."/>
            <person name="Svensson K."/>
            <person name="Thompson N."/>
            <person name="Vergez L."/>
            <person name="Wagg J.K."/>
            <person name="Wren B.W."/>
            <person name="Lindler L.E."/>
            <person name="Andersson S.G.E."/>
            <person name="Forsman M."/>
            <person name="Titball R.W."/>
        </authorList>
    </citation>
    <scope>NUCLEOTIDE SEQUENCE [LARGE SCALE GENOMIC DNA]</scope>
    <source>
        <strain>SCHU S4 / Schu 4</strain>
    </source>
</reference>
<feature type="chain" id="PRO_0000302205" description="Large ribosomal subunit protein bL36">
    <location>
        <begin position="1"/>
        <end position="37"/>
    </location>
</feature>
<protein>
    <recommendedName>
        <fullName evidence="1">Large ribosomal subunit protein bL36</fullName>
    </recommendedName>
    <alternativeName>
        <fullName evidence="2">50S ribosomal protein L36</fullName>
    </alternativeName>
</protein>
<proteinExistence type="inferred from homology"/>
<gene>
    <name evidence="1" type="primary">rpmJ</name>
    <name type="ordered locus">FTT_0346</name>
</gene>
<name>RL36_FRATT</name>